<reference key="1">
    <citation type="journal article" date="2000" name="Science">
        <title>The genome sequence of Drosophila melanogaster.</title>
        <authorList>
            <person name="Adams M.D."/>
            <person name="Celniker S.E."/>
            <person name="Holt R.A."/>
            <person name="Evans C.A."/>
            <person name="Gocayne J.D."/>
            <person name="Amanatides P.G."/>
            <person name="Scherer S.E."/>
            <person name="Li P.W."/>
            <person name="Hoskins R.A."/>
            <person name="Galle R.F."/>
            <person name="George R.A."/>
            <person name="Lewis S.E."/>
            <person name="Richards S."/>
            <person name="Ashburner M."/>
            <person name="Henderson S.N."/>
            <person name="Sutton G.G."/>
            <person name="Wortman J.R."/>
            <person name="Yandell M.D."/>
            <person name="Zhang Q."/>
            <person name="Chen L.X."/>
            <person name="Brandon R.C."/>
            <person name="Rogers Y.-H.C."/>
            <person name="Blazej R.G."/>
            <person name="Champe M."/>
            <person name="Pfeiffer B.D."/>
            <person name="Wan K.H."/>
            <person name="Doyle C."/>
            <person name="Baxter E.G."/>
            <person name="Helt G."/>
            <person name="Nelson C.R."/>
            <person name="Miklos G.L.G."/>
            <person name="Abril J.F."/>
            <person name="Agbayani A."/>
            <person name="An H.-J."/>
            <person name="Andrews-Pfannkoch C."/>
            <person name="Baldwin D."/>
            <person name="Ballew R.M."/>
            <person name="Basu A."/>
            <person name="Baxendale J."/>
            <person name="Bayraktaroglu L."/>
            <person name="Beasley E.M."/>
            <person name="Beeson K.Y."/>
            <person name="Benos P.V."/>
            <person name="Berman B.P."/>
            <person name="Bhandari D."/>
            <person name="Bolshakov S."/>
            <person name="Borkova D."/>
            <person name="Botchan M.R."/>
            <person name="Bouck J."/>
            <person name="Brokstein P."/>
            <person name="Brottier P."/>
            <person name="Burtis K.C."/>
            <person name="Busam D.A."/>
            <person name="Butler H."/>
            <person name="Cadieu E."/>
            <person name="Center A."/>
            <person name="Chandra I."/>
            <person name="Cherry J.M."/>
            <person name="Cawley S."/>
            <person name="Dahlke C."/>
            <person name="Davenport L.B."/>
            <person name="Davies P."/>
            <person name="de Pablos B."/>
            <person name="Delcher A."/>
            <person name="Deng Z."/>
            <person name="Mays A.D."/>
            <person name="Dew I."/>
            <person name="Dietz S.M."/>
            <person name="Dodson K."/>
            <person name="Doup L.E."/>
            <person name="Downes M."/>
            <person name="Dugan-Rocha S."/>
            <person name="Dunkov B.C."/>
            <person name="Dunn P."/>
            <person name="Durbin K.J."/>
            <person name="Evangelista C.C."/>
            <person name="Ferraz C."/>
            <person name="Ferriera S."/>
            <person name="Fleischmann W."/>
            <person name="Fosler C."/>
            <person name="Gabrielian A.E."/>
            <person name="Garg N.S."/>
            <person name="Gelbart W.M."/>
            <person name="Glasser K."/>
            <person name="Glodek A."/>
            <person name="Gong F."/>
            <person name="Gorrell J.H."/>
            <person name="Gu Z."/>
            <person name="Guan P."/>
            <person name="Harris M."/>
            <person name="Harris N.L."/>
            <person name="Harvey D.A."/>
            <person name="Heiman T.J."/>
            <person name="Hernandez J.R."/>
            <person name="Houck J."/>
            <person name="Hostin D."/>
            <person name="Houston K.A."/>
            <person name="Howland T.J."/>
            <person name="Wei M.-H."/>
            <person name="Ibegwam C."/>
            <person name="Jalali M."/>
            <person name="Kalush F."/>
            <person name="Karpen G.H."/>
            <person name="Ke Z."/>
            <person name="Kennison J.A."/>
            <person name="Ketchum K.A."/>
            <person name="Kimmel B.E."/>
            <person name="Kodira C.D."/>
            <person name="Kraft C.L."/>
            <person name="Kravitz S."/>
            <person name="Kulp D."/>
            <person name="Lai Z."/>
            <person name="Lasko P."/>
            <person name="Lei Y."/>
            <person name="Levitsky A.A."/>
            <person name="Li J.H."/>
            <person name="Li Z."/>
            <person name="Liang Y."/>
            <person name="Lin X."/>
            <person name="Liu X."/>
            <person name="Mattei B."/>
            <person name="McIntosh T.C."/>
            <person name="McLeod M.P."/>
            <person name="McPherson D."/>
            <person name="Merkulov G."/>
            <person name="Milshina N.V."/>
            <person name="Mobarry C."/>
            <person name="Morris J."/>
            <person name="Moshrefi A."/>
            <person name="Mount S.M."/>
            <person name="Moy M."/>
            <person name="Murphy B."/>
            <person name="Murphy L."/>
            <person name="Muzny D.M."/>
            <person name="Nelson D.L."/>
            <person name="Nelson D.R."/>
            <person name="Nelson K.A."/>
            <person name="Nixon K."/>
            <person name="Nusskern D.R."/>
            <person name="Pacleb J.M."/>
            <person name="Palazzolo M."/>
            <person name="Pittman G.S."/>
            <person name="Pan S."/>
            <person name="Pollard J."/>
            <person name="Puri V."/>
            <person name="Reese M.G."/>
            <person name="Reinert K."/>
            <person name="Remington K."/>
            <person name="Saunders R.D.C."/>
            <person name="Scheeler F."/>
            <person name="Shen H."/>
            <person name="Shue B.C."/>
            <person name="Siden-Kiamos I."/>
            <person name="Simpson M."/>
            <person name="Skupski M.P."/>
            <person name="Smith T.J."/>
            <person name="Spier E."/>
            <person name="Spradling A.C."/>
            <person name="Stapleton M."/>
            <person name="Strong R."/>
            <person name="Sun E."/>
            <person name="Svirskas R."/>
            <person name="Tector C."/>
            <person name="Turner R."/>
            <person name="Venter E."/>
            <person name="Wang A.H."/>
            <person name="Wang X."/>
            <person name="Wang Z.-Y."/>
            <person name="Wassarman D.A."/>
            <person name="Weinstock G.M."/>
            <person name="Weissenbach J."/>
            <person name="Williams S.M."/>
            <person name="Woodage T."/>
            <person name="Worley K.C."/>
            <person name="Wu D."/>
            <person name="Yang S."/>
            <person name="Yao Q.A."/>
            <person name="Ye J."/>
            <person name="Yeh R.-F."/>
            <person name="Zaveri J.S."/>
            <person name="Zhan M."/>
            <person name="Zhang G."/>
            <person name="Zhao Q."/>
            <person name="Zheng L."/>
            <person name="Zheng X.H."/>
            <person name="Zhong F.N."/>
            <person name="Zhong W."/>
            <person name="Zhou X."/>
            <person name="Zhu S.C."/>
            <person name="Zhu X."/>
            <person name="Smith H.O."/>
            <person name="Gibbs R.A."/>
            <person name="Myers E.W."/>
            <person name="Rubin G.M."/>
            <person name="Venter J.C."/>
        </authorList>
    </citation>
    <scope>NUCLEOTIDE SEQUENCE [LARGE SCALE GENOMIC DNA]</scope>
    <source>
        <strain>Berkeley</strain>
    </source>
</reference>
<reference key="2">
    <citation type="journal article" date="2002" name="Genome Biol.">
        <title>Annotation of the Drosophila melanogaster euchromatic genome: a systematic review.</title>
        <authorList>
            <person name="Misra S."/>
            <person name="Crosby M.A."/>
            <person name="Mungall C.J."/>
            <person name="Matthews B.B."/>
            <person name="Campbell K.S."/>
            <person name="Hradecky P."/>
            <person name="Huang Y."/>
            <person name="Kaminker J.S."/>
            <person name="Millburn G.H."/>
            <person name="Prochnik S.E."/>
            <person name="Smith C.D."/>
            <person name="Tupy J.L."/>
            <person name="Whitfield E.J."/>
            <person name="Bayraktaroglu L."/>
            <person name="Berman B.P."/>
            <person name="Bettencourt B.R."/>
            <person name="Celniker S.E."/>
            <person name="de Grey A.D.N.J."/>
            <person name="Drysdale R.A."/>
            <person name="Harris N.L."/>
            <person name="Richter J."/>
            <person name="Russo S."/>
            <person name="Schroeder A.J."/>
            <person name="Shu S.Q."/>
            <person name="Stapleton M."/>
            <person name="Yamada C."/>
            <person name="Ashburner M."/>
            <person name="Gelbart W.M."/>
            <person name="Rubin G.M."/>
            <person name="Lewis S.E."/>
        </authorList>
    </citation>
    <scope>GENOME REANNOTATION</scope>
    <source>
        <strain>Berkeley</strain>
    </source>
</reference>
<reference key="3">
    <citation type="journal article" date="2002" name="Genome Biol.">
        <title>A Drosophila full-length cDNA resource.</title>
        <authorList>
            <person name="Stapleton M."/>
            <person name="Carlson J.W."/>
            <person name="Brokstein P."/>
            <person name="Yu C."/>
            <person name="Champe M."/>
            <person name="George R.A."/>
            <person name="Guarin H."/>
            <person name="Kronmiller B."/>
            <person name="Pacleb J.M."/>
            <person name="Park S."/>
            <person name="Wan K.H."/>
            <person name="Rubin G.M."/>
            <person name="Celniker S.E."/>
        </authorList>
    </citation>
    <scope>NUCLEOTIDE SEQUENCE [LARGE SCALE MRNA]</scope>
    <source>
        <strain>Berkeley</strain>
        <tissue>Head</tissue>
    </source>
</reference>
<reference key="4">
    <citation type="submission" date="2008-09" db="EMBL/GenBank/DDBJ databases">
        <authorList>
            <person name="Carlson J.W."/>
            <person name="Booth B."/>
            <person name="Frise E."/>
            <person name="Park S."/>
            <person name="Wan K.H."/>
            <person name="Yu C."/>
            <person name="Celniker S.E."/>
        </authorList>
    </citation>
    <scope>NUCLEOTIDE SEQUENCE [LARGE SCALE MRNA]</scope>
    <source>
        <strain>Berkeley</strain>
    </source>
</reference>
<accession>Q9VMC8</accession>
<accession>B5RIJ7</accession>
<accession>Q8MQM8</accession>
<sequence length="111" mass="12522">MAKHHPDLIFCRKQPGVAIGRLCEKDDGKCVICDSYVRPCTLVRICDECNYGSYQGRCVICGGPGVSDAYYCKSCTIQEKDRDGCPKIVNLGSSKTDLFYERKKYGFKQNY</sequence>
<evidence type="ECO:0000305" key="1"/>
<evidence type="ECO:0000312" key="2">
    <source>
        <dbReference type="FlyBase" id="FBgn0031822"/>
    </source>
</evidence>
<proteinExistence type="inferred from homology"/>
<keyword id="KW-1185">Reference proteome</keyword>
<protein>
    <recommendedName>
        <fullName>PHD finger-like domain-containing protein 5A</fullName>
    </recommendedName>
</protein>
<organism>
    <name type="scientific">Drosophila melanogaster</name>
    <name type="common">Fruit fly</name>
    <dbReference type="NCBI Taxonomy" id="7227"/>
    <lineage>
        <taxon>Eukaryota</taxon>
        <taxon>Metazoa</taxon>
        <taxon>Ecdysozoa</taxon>
        <taxon>Arthropoda</taxon>
        <taxon>Hexapoda</taxon>
        <taxon>Insecta</taxon>
        <taxon>Pterygota</taxon>
        <taxon>Neoptera</taxon>
        <taxon>Endopterygota</taxon>
        <taxon>Diptera</taxon>
        <taxon>Brachycera</taxon>
        <taxon>Muscomorpha</taxon>
        <taxon>Ephydroidea</taxon>
        <taxon>Drosophilidae</taxon>
        <taxon>Drosophila</taxon>
        <taxon>Sophophora</taxon>
    </lineage>
</organism>
<name>PHF5A_DROME</name>
<comment type="similarity">
    <text evidence="1">Belongs to the PHF5 family.</text>
</comment>
<dbReference type="EMBL" id="AE014134">
    <property type="protein sequence ID" value="AAF52393.2"/>
    <property type="molecule type" value="Genomic_DNA"/>
</dbReference>
<dbReference type="EMBL" id="AY128489">
    <property type="protein sequence ID" value="AAM75082.1"/>
    <property type="molecule type" value="mRNA"/>
</dbReference>
<dbReference type="EMBL" id="BT044121">
    <property type="protein sequence ID" value="ACH92186.1"/>
    <property type="molecule type" value="mRNA"/>
</dbReference>
<dbReference type="RefSeq" id="NP_609038.1">
    <property type="nucleotide sequence ID" value="NM_135194.3"/>
</dbReference>
<dbReference type="SMR" id="Q9VMC8"/>
<dbReference type="BioGRID" id="60066">
    <property type="interactions" value="3"/>
</dbReference>
<dbReference type="FunCoup" id="Q9VMC8">
    <property type="interactions" value="1672"/>
</dbReference>
<dbReference type="STRING" id="7227.FBpp0078894"/>
<dbReference type="PaxDb" id="7227-FBpp0078894"/>
<dbReference type="DNASU" id="33909"/>
<dbReference type="EnsemblMetazoa" id="FBtr0079264">
    <property type="protein sequence ID" value="FBpp0078894"/>
    <property type="gene ID" value="FBgn0031822"/>
</dbReference>
<dbReference type="GeneID" id="33909"/>
<dbReference type="KEGG" id="dme:Dmel_CG9548"/>
<dbReference type="UCSC" id="CG9548-RA">
    <property type="organism name" value="d. melanogaster"/>
</dbReference>
<dbReference type="AGR" id="FB:FBgn0031822"/>
<dbReference type="CTD" id="84844"/>
<dbReference type="FlyBase" id="FBgn0031822">
    <property type="gene designation" value="Phf5a"/>
</dbReference>
<dbReference type="VEuPathDB" id="VectorBase:FBgn0031822"/>
<dbReference type="eggNOG" id="KOG1705">
    <property type="taxonomic scope" value="Eukaryota"/>
</dbReference>
<dbReference type="GeneTree" id="ENSGT00390000018518"/>
<dbReference type="HOGENOM" id="CLU_110369_2_0_1"/>
<dbReference type="InParanoid" id="Q9VMC8"/>
<dbReference type="OMA" id="AYYCWEC"/>
<dbReference type="OrthoDB" id="10248186at2759"/>
<dbReference type="PhylomeDB" id="Q9VMC8"/>
<dbReference type="Reactome" id="R-DME-72163">
    <property type="pathway name" value="mRNA Splicing - Major Pathway"/>
</dbReference>
<dbReference type="BioGRID-ORCS" id="33909">
    <property type="hits" value="0 hits in 1 CRISPR screen"/>
</dbReference>
<dbReference type="GenomeRNAi" id="33909"/>
<dbReference type="PRO" id="PR:Q9VMC8"/>
<dbReference type="Proteomes" id="UP000000803">
    <property type="component" value="Chromosome 2L"/>
</dbReference>
<dbReference type="Bgee" id="FBgn0031822">
    <property type="expression patterns" value="Expressed in adult class III enteroendocrine cell in adult midgut (Drosophila) and 103 other cell types or tissues"/>
</dbReference>
<dbReference type="ExpressionAtlas" id="Q9VMC8">
    <property type="expression patterns" value="baseline and differential"/>
</dbReference>
<dbReference type="GO" id="GO:0071013">
    <property type="term" value="C:catalytic step 2 spliceosome"/>
    <property type="evidence" value="ECO:0007005"/>
    <property type="project" value="FlyBase"/>
</dbReference>
<dbReference type="GO" id="GO:0071011">
    <property type="term" value="C:precatalytic spliceosome"/>
    <property type="evidence" value="ECO:0007005"/>
    <property type="project" value="FlyBase"/>
</dbReference>
<dbReference type="GO" id="GO:0005686">
    <property type="term" value="C:U2 snRNP"/>
    <property type="evidence" value="ECO:0000318"/>
    <property type="project" value="GO_Central"/>
</dbReference>
<dbReference type="GO" id="GO:0003723">
    <property type="term" value="F:RNA binding"/>
    <property type="evidence" value="ECO:0000250"/>
    <property type="project" value="FlyBase"/>
</dbReference>
<dbReference type="GO" id="GO:0000398">
    <property type="term" value="P:mRNA splicing, via spliceosome"/>
    <property type="evidence" value="ECO:0000250"/>
    <property type="project" value="FlyBase"/>
</dbReference>
<dbReference type="InterPro" id="IPR005345">
    <property type="entry name" value="PHF5"/>
</dbReference>
<dbReference type="PANTHER" id="PTHR13120">
    <property type="entry name" value="PHD FINGER-LIKE DOMAIN-CONTAINING PROTEIN 5A"/>
    <property type="match status" value="1"/>
</dbReference>
<dbReference type="Pfam" id="PF03660">
    <property type="entry name" value="PHF5"/>
    <property type="match status" value="1"/>
</dbReference>
<dbReference type="PIRSF" id="PIRSF016468">
    <property type="entry name" value="PHF5"/>
    <property type="match status" value="1"/>
</dbReference>
<feature type="chain" id="PRO_0000218719" description="PHD finger-like domain-containing protein 5A">
    <location>
        <begin position="1"/>
        <end position="111"/>
    </location>
</feature>
<feature type="sequence conflict" description="In Ref. 3; AAM75082." evidence="1" ref="3">
    <original>K</original>
    <variation>R</variation>
    <location>
        <position position="108"/>
    </location>
</feature>
<gene>
    <name evidence="2" type="primary">Phf5a</name>
    <name evidence="2" type="ORF">CG9548</name>
</gene>